<evidence type="ECO:0000255" key="1">
    <source>
        <dbReference type="HAMAP-Rule" id="MF_00147"/>
    </source>
</evidence>
<keyword id="KW-0963">Cytoplasm</keyword>
<keyword id="KW-0312">Gluconeogenesis</keyword>
<keyword id="KW-0324">Glycolysis</keyword>
<keyword id="KW-0413">Isomerase</keyword>
<name>TPIS_PEDPA</name>
<sequence>MRTPIIAGNWKMNKNPQETQEFLDAIKGKLPDASVVESVIAAPAIDLSTLVAFSKDEQLKTAAENSYFEDEGAFTGETSPKALNEMGVNYVVIGHSERRQYFGETDEDINKKAKAIFNNNMTPIICCGETLEQREAGETNEWVAGQITNALKDLTAEQVAASVIAYEPIWAIGTGKTASSDQAQEVCHVIRETVAKLYDQTVADKVRIQYGGSVKPANIAELMGKEDIDGGLVGGASLDPESFLELVNYKG</sequence>
<feature type="chain" id="PRO_1000071492" description="Triosephosphate isomerase">
    <location>
        <begin position="1"/>
        <end position="251"/>
    </location>
</feature>
<feature type="active site" description="Electrophile" evidence="1">
    <location>
        <position position="95"/>
    </location>
</feature>
<feature type="active site" description="Proton acceptor" evidence="1">
    <location>
        <position position="167"/>
    </location>
</feature>
<feature type="binding site" evidence="1">
    <location>
        <begin position="9"/>
        <end position="11"/>
    </location>
    <ligand>
        <name>substrate</name>
    </ligand>
</feature>
<feature type="binding site" evidence="1">
    <location>
        <position position="173"/>
    </location>
    <ligand>
        <name>substrate</name>
    </ligand>
</feature>
<feature type="binding site" evidence="1">
    <location>
        <position position="213"/>
    </location>
    <ligand>
        <name>substrate</name>
    </ligand>
</feature>
<feature type="binding site" evidence="1">
    <location>
        <begin position="234"/>
        <end position="235"/>
    </location>
    <ligand>
        <name>substrate</name>
    </ligand>
</feature>
<accession>Q03GW6</accession>
<comment type="function">
    <text evidence="1">Involved in the gluconeogenesis. Catalyzes stereospecifically the conversion of dihydroxyacetone phosphate (DHAP) to D-glyceraldehyde-3-phosphate (G3P).</text>
</comment>
<comment type="catalytic activity">
    <reaction evidence="1">
        <text>D-glyceraldehyde 3-phosphate = dihydroxyacetone phosphate</text>
        <dbReference type="Rhea" id="RHEA:18585"/>
        <dbReference type="ChEBI" id="CHEBI:57642"/>
        <dbReference type="ChEBI" id="CHEBI:59776"/>
        <dbReference type="EC" id="5.3.1.1"/>
    </reaction>
</comment>
<comment type="pathway">
    <text evidence="1">Carbohydrate biosynthesis; gluconeogenesis.</text>
</comment>
<comment type="pathway">
    <text evidence="1">Carbohydrate degradation; glycolysis; D-glyceraldehyde 3-phosphate from glycerone phosphate: step 1/1.</text>
</comment>
<comment type="subunit">
    <text evidence="1">Homodimer.</text>
</comment>
<comment type="subcellular location">
    <subcellularLocation>
        <location evidence="1">Cytoplasm</location>
    </subcellularLocation>
</comment>
<comment type="similarity">
    <text evidence="1">Belongs to the triosephosphate isomerase family.</text>
</comment>
<proteinExistence type="inferred from homology"/>
<gene>
    <name evidence="1" type="primary">tpiA</name>
    <name type="ordered locus">PEPE_0461</name>
</gene>
<dbReference type="EC" id="5.3.1.1" evidence="1"/>
<dbReference type="EMBL" id="CP000422">
    <property type="protein sequence ID" value="ABJ67556.1"/>
    <property type="molecule type" value="Genomic_DNA"/>
</dbReference>
<dbReference type="RefSeq" id="WP_002834066.1">
    <property type="nucleotide sequence ID" value="NC_008525.1"/>
</dbReference>
<dbReference type="SMR" id="Q03GW6"/>
<dbReference type="STRING" id="278197.PEPE_0461"/>
<dbReference type="GeneID" id="33063004"/>
<dbReference type="KEGG" id="ppe:PEPE_0461"/>
<dbReference type="eggNOG" id="COG0149">
    <property type="taxonomic scope" value="Bacteria"/>
</dbReference>
<dbReference type="HOGENOM" id="CLU_024251_2_3_9"/>
<dbReference type="OrthoDB" id="9809429at2"/>
<dbReference type="UniPathway" id="UPA00109">
    <property type="reaction ID" value="UER00189"/>
</dbReference>
<dbReference type="UniPathway" id="UPA00138"/>
<dbReference type="Proteomes" id="UP000000773">
    <property type="component" value="Chromosome"/>
</dbReference>
<dbReference type="GO" id="GO:0005829">
    <property type="term" value="C:cytosol"/>
    <property type="evidence" value="ECO:0007669"/>
    <property type="project" value="TreeGrafter"/>
</dbReference>
<dbReference type="GO" id="GO:0004807">
    <property type="term" value="F:triose-phosphate isomerase activity"/>
    <property type="evidence" value="ECO:0007669"/>
    <property type="project" value="UniProtKB-UniRule"/>
</dbReference>
<dbReference type="GO" id="GO:0006094">
    <property type="term" value="P:gluconeogenesis"/>
    <property type="evidence" value="ECO:0007669"/>
    <property type="project" value="UniProtKB-UniRule"/>
</dbReference>
<dbReference type="GO" id="GO:0046166">
    <property type="term" value="P:glyceraldehyde-3-phosphate biosynthetic process"/>
    <property type="evidence" value="ECO:0007669"/>
    <property type="project" value="TreeGrafter"/>
</dbReference>
<dbReference type="GO" id="GO:0019563">
    <property type="term" value="P:glycerol catabolic process"/>
    <property type="evidence" value="ECO:0007669"/>
    <property type="project" value="TreeGrafter"/>
</dbReference>
<dbReference type="GO" id="GO:0006096">
    <property type="term" value="P:glycolytic process"/>
    <property type="evidence" value="ECO:0007669"/>
    <property type="project" value="UniProtKB-UniRule"/>
</dbReference>
<dbReference type="CDD" id="cd00311">
    <property type="entry name" value="TIM"/>
    <property type="match status" value="1"/>
</dbReference>
<dbReference type="FunFam" id="3.20.20.70:FF:000016">
    <property type="entry name" value="Triosephosphate isomerase"/>
    <property type="match status" value="1"/>
</dbReference>
<dbReference type="Gene3D" id="3.20.20.70">
    <property type="entry name" value="Aldolase class I"/>
    <property type="match status" value="1"/>
</dbReference>
<dbReference type="HAMAP" id="MF_00147_B">
    <property type="entry name" value="TIM_B"/>
    <property type="match status" value="1"/>
</dbReference>
<dbReference type="InterPro" id="IPR013785">
    <property type="entry name" value="Aldolase_TIM"/>
</dbReference>
<dbReference type="InterPro" id="IPR035990">
    <property type="entry name" value="TIM_sf"/>
</dbReference>
<dbReference type="InterPro" id="IPR022896">
    <property type="entry name" value="TrioseP_Isoase_bac/euk"/>
</dbReference>
<dbReference type="InterPro" id="IPR000652">
    <property type="entry name" value="Triosephosphate_isomerase"/>
</dbReference>
<dbReference type="InterPro" id="IPR020861">
    <property type="entry name" value="Triosephosphate_isomerase_AS"/>
</dbReference>
<dbReference type="NCBIfam" id="TIGR00419">
    <property type="entry name" value="tim"/>
    <property type="match status" value="1"/>
</dbReference>
<dbReference type="PANTHER" id="PTHR21139">
    <property type="entry name" value="TRIOSEPHOSPHATE ISOMERASE"/>
    <property type="match status" value="1"/>
</dbReference>
<dbReference type="PANTHER" id="PTHR21139:SF42">
    <property type="entry name" value="TRIOSEPHOSPHATE ISOMERASE"/>
    <property type="match status" value="1"/>
</dbReference>
<dbReference type="Pfam" id="PF00121">
    <property type="entry name" value="TIM"/>
    <property type="match status" value="1"/>
</dbReference>
<dbReference type="SUPFAM" id="SSF51351">
    <property type="entry name" value="Triosephosphate isomerase (TIM)"/>
    <property type="match status" value="1"/>
</dbReference>
<dbReference type="PROSITE" id="PS00171">
    <property type="entry name" value="TIM_1"/>
    <property type="match status" value="1"/>
</dbReference>
<dbReference type="PROSITE" id="PS51440">
    <property type="entry name" value="TIM_2"/>
    <property type="match status" value="1"/>
</dbReference>
<reference key="1">
    <citation type="journal article" date="2006" name="Proc. Natl. Acad. Sci. U.S.A.">
        <title>Comparative genomics of the lactic acid bacteria.</title>
        <authorList>
            <person name="Makarova K.S."/>
            <person name="Slesarev A."/>
            <person name="Wolf Y.I."/>
            <person name="Sorokin A."/>
            <person name="Mirkin B."/>
            <person name="Koonin E.V."/>
            <person name="Pavlov A."/>
            <person name="Pavlova N."/>
            <person name="Karamychev V."/>
            <person name="Polouchine N."/>
            <person name="Shakhova V."/>
            <person name="Grigoriev I."/>
            <person name="Lou Y."/>
            <person name="Rohksar D."/>
            <person name="Lucas S."/>
            <person name="Huang K."/>
            <person name="Goodstein D.M."/>
            <person name="Hawkins T."/>
            <person name="Plengvidhya V."/>
            <person name="Welker D."/>
            <person name="Hughes J."/>
            <person name="Goh Y."/>
            <person name="Benson A."/>
            <person name="Baldwin K."/>
            <person name="Lee J.-H."/>
            <person name="Diaz-Muniz I."/>
            <person name="Dosti B."/>
            <person name="Smeianov V."/>
            <person name="Wechter W."/>
            <person name="Barabote R."/>
            <person name="Lorca G."/>
            <person name="Altermann E."/>
            <person name="Barrangou R."/>
            <person name="Ganesan B."/>
            <person name="Xie Y."/>
            <person name="Rawsthorne H."/>
            <person name="Tamir D."/>
            <person name="Parker C."/>
            <person name="Breidt F."/>
            <person name="Broadbent J.R."/>
            <person name="Hutkins R."/>
            <person name="O'Sullivan D."/>
            <person name="Steele J."/>
            <person name="Unlu G."/>
            <person name="Saier M.H. Jr."/>
            <person name="Klaenhammer T."/>
            <person name="Richardson P."/>
            <person name="Kozyavkin S."/>
            <person name="Weimer B.C."/>
            <person name="Mills D.A."/>
        </authorList>
    </citation>
    <scope>NUCLEOTIDE SEQUENCE [LARGE SCALE GENOMIC DNA]</scope>
    <source>
        <strain>ATCC 25745 / CCUG 21536 / LMG 10740 / 183-1w</strain>
    </source>
</reference>
<organism>
    <name type="scientific">Pediococcus pentosaceus (strain ATCC 25745 / CCUG 21536 / LMG 10740 / 183-1w)</name>
    <dbReference type="NCBI Taxonomy" id="278197"/>
    <lineage>
        <taxon>Bacteria</taxon>
        <taxon>Bacillati</taxon>
        <taxon>Bacillota</taxon>
        <taxon>Bacilli</taxon>
        <taxon>Lactobacillales</taxon>
        <taxon>Lactobacillaceae</taxon>
        <taxon>Pediococcus</taxon>
    </lineage>
</organism>
<protein>
    <recommendedName>
        <fullName evidence="1">Triosephosphate isomerase</fullName>
        <shortName evidence="1">TIM</shortName>
        <shortName evidence="1">TPI</shortName>
        <ecNumber evidence="1">5.3.1.1</ecNumber>
    </recommendedName>
    <alternativeName>
        <fullName evidence="1">Triose-phosphate isomerase</fullName>
    </alternativeName>
</protein>